<keyword id="KW-0028">Amino-acid biosynthesis</keyword>
<keyword id="KW-0055">Arginine biosynthesis</keyword>
<keyword id="KW-0963">Cytoplasm</keyword>
<keyword id="KW-0238">DNA-binding</keyword>
<keyword id="KW-0678">Repressor</keyword>
<keyword id="KW-0804">Transcription</keyword>
<keyword id="KW-0805">Transcription regulation</keyword>
<feature type="chain" id="PRO_0000205115" description="Arginine repressor">
    <location>
        <begin position="1"/>
        <end position="150"/>
    </location>
</feature>
<protein>
    <recommendedName>
        <fullName evidence="1">Arginine repressor</fullName>
    </recommendedName>
</protein>
<evidence type="ECO:0000255" key="1">
    <source>
        <dbReference type="HAMAP-Rule" id="MF_00173"/>
    </source>
</evidence>
<reference key="1">
    <citation type="journal article" date="2001" name="Lancet">
        <title>Whole genome sequencing of meticillin-resistant Staphylococcus aureus.</title>
        <authorList>
            <person name="Kuroda M."/>
            <person name="Ohta T."/>
            <person name="Uchiyama I."/>
            <person name="Baba T."/>
            <person name="Yuzawa H."/>
            <person name="Kobayashi I."/>
            <person name="Cui L."/>
            <person name="Oguchi A."/>
            <person name="Aoki K."/>
            <person name="Nagai Y."/>
            <person name="Lian J.-Q."/>
            <person name="Ito T."/>
            <person name="Kanamori M."/>
            <person name="Matsumaru H."/>
            <person name="Maruyama A."/>
            <person name="Murakami H."/>
            <person name="Hosoyama A."/>
            <person name="Mizutani-Ui Y."/>
            <person name="Takahashi N.K."/>
            <person name="Sawano T."/>
            <person name="Inoue R."/>
            <person name="Kaito C."/>
            <person name="Sekimizu K."/>
            <person name="Hirakawa H."/>
            <person name="Kuhara S."/>
            <person name="Goto S."/>
            <person name="Yabuzaki J."/>
            <person name="Kanehisa M."/>
            <person name="Yamashita A."/>
            <person name="Oshima K."/>
            <person name="Furuya K."/>
            <person name="Yoshino C."/>
            <person name="Shiba T."/>
            <person name="Hattori M."/>
            <person name="Ogasawara N."/>
            <person name="Hayashi H."/>
            <person name="Hiramatsu K."/>
        </authorList>
    </citation>
    <scope>NUCLEOTIDE SEQUENCE [LARGE SCALE GENOMIC DNA]</scope>
    <source>
        <strain>Mu50 / ATCC 700699</strain>
    </source>
</reference>
<sequence>MPKKSVRHIKIREIISNEQIETQDELVKRLNDYDLNVTQATVSRDIKELQLIKVPIPSGQYVYSLPNDRKFHPLEKLGRYLMDSFVNIDGTDNLLVLKTLPGNAQSIGAILDQINWEEVLGTICGDDTCLIICRSKEASDEIKSRIFNLL</sequence>
<organism>
    <name type="scientific">Staphylococcus aureus (strain Mu50 / ATCC 700699)</name>
    <dbReference type="NCBI Taxonomy" id="158878"/>
    <lineage>
        <taxon>Bacteria</taxon>
        <taxon>Bacillati</taxon>
        <taxon>Bacillota</taxon>
        <taxon>Bacilli</taxon>
        <taxon>Bacillales</taxon>
        <taxon>Staphylococcaceae</taxon>
        <taxon>Staphylococcus</taxon>
    </lineage>
</organism>
<gene>
    <name evidence="1" type="primary">argR</name>
    <name type="synonym">ahrC</name>
    <name type="ordered locus">SAV1520</name>
</gene>
<dbReference type="EMBL" id="BA000017">
    <property type="protein sequence ID" value="BAB57682.1"/>
    <property type="molecule type" value="Genomic_DNA"/>
</dbReference>
<dbReference type="RefSeq" id="WP_001124985.1">
    <property type="nucleotide sequence ID" value="NC_002758.2"/>
</dbReference>
<dbReference type="SMR" id="P63579"/>
<dbReference type="GeneID" id="98345891"/>
<dbReference type="KEGG" id="sav:SAV1520"/>
<dbReference type="HOGENOM" id="CLU_097103_3_0_9"/>
<dbReference type="PhylomeDB" id="P63579"/>
<dbReference type="UniPathway" id="UPA00068"/>
<dbReference type="Proteomes" id="UP000002481">
    <property type="component" value="Chromosome"/>
</dbReference>
<dbReference type="GO" id="GO:0005737">
    <property type="term" value="C:cytoplasm"/>
    <property type="evidence" value="ECO:0007669"/>
    <property type="project" value="UniProtKB-SubCell"/>
</dbReference>
<dbReference type="GO" id="GO:0034618">
    <property type="term" value="F:arginine binding"/>
    <property type="evidence" value="ECO:0007669"/>
    <property type="project" value="InterPro"/>
</dbReference>
<dbReference type="GO" id="GO:0003677">
    <property type="term" value="F:DNA binding"/>
    <property type="evidence" value="ECO:0007669"/>
    <property type="project" value="UniProtKB-KW"/>
</dbReference>
<dbReference type="GO" id="GO:0003700">
    <property type="term" value="F:DNA-binding transcription factor activity"/>
    <property type="evidence" value="ECO:0007669"/>
    <property type="project" value="UniProtKB-UniRule"/>
</dbReference>
<dbReference type="GO" id="GO:0006526">
    <property type="term" value="P:L-arginine biosynthetic process"/>
    <property type="evidence" value="ECO:0007669"/>
    <property type="project" value="UniProtKB-UniPathway"/>
</dbReference>
<dbReference type="GO" id="GO:0051259">
    <property type="term" value="P:protein complex oligomerization"/>
    <property type="evidence" value="ECO:0007669"/>
    <property type="project" value="InterPro"/>
</dbReference>
<dbReference type="GO" id="GO:1900079">
    <property type="term" value="P:regulation of arginine biosynthetic process"/>
    <property type="evidence" value="ECO:0007669"/>
    <property type="project" value="UniProtKB-UniRule"/>
</dbReference>
<dbReference type="Gene3D" id="3.30.1360.40">
    <property type="match status" value="1"/>
</dbReference>
<dbReference type="Gene3D" id="1.10.10.10">
    <property type="entry name" value="Winged helix-like DNA-binding domain superfamily/Winged helix DNA-binding domain"/>
    <property type="match status" value="1"/>
</dbReference>
<dbReference type="HAMAP" id="MF_00173">
    <property type="entry name" value="Arg_repressor"/>
    <property type="match status" value="1"/>
</dbReference>
<dbReference type="InterPro" id="IPR001669">
    <property type="entry name" value="Arg_repress"/>
</dbReference>
<dbReference type="InterPro" id="IPR020899">
    <property type="entry name" value="Arg_repress_C"/>
</dbReference>
<dbReference type="InterPro" id="IPR036251">
    <property type="entry name" value="Arg_repress_C_sf"/>
</dbReference>
<dbReference type="InterPro" id="IPR020900">
    <property type="entry name" value="Arg_repress_DNA-bd"/>
</dbReference>
<dbReference type="InterPro" id="IPR036388">
    <property type="entry name" value="WH-like_DNA-bd_sf"/>
</dbReference>
<dbReference type="InterPro" id="IPR036390">
    <property type="entry name" value="WH_DNA-bd_sf"/>
</dbReference>
<dbReference type="NCBIfam" id="TIGR01529">
    <property type="entry name" value="argR_whole"/>
    <property type="match status" value="1"/>
</dbReference>
<dbReference type="NCBIfam" id="NF003281">
    <property type="entry name" value="PRK04280.1"/>
    <property type="match status" value="1"/>
</dbReference>
<dbReference type="PANTHER" id="PTHR34471">
    <property type="entry name" value="ARGININE REPRESSOR"/>
    <property type="match status" value="1"/>
</dbReference>
<dbReference type="PANTHER" id="PTHR34471:SF1">
    <property type="entry name" value="ARGININE REPRESSOR"/>
    <property type="match status" value="1"/>
</dbReference>
<dbReference type="Pfam" id="PF01316">
    <property type="entry name" value="Arg_repressor"/>
    <property type="match status" value="1"/>
</dbReference>
<dbReference type="Pfam" id="PF02863">
    <property type="entry name" value="Arg_repressor_C"/>
    <property type="match status" value="1"/>
</dbReference>
<dbReference type="PRINTS" id="PR01467">
    <property type="entry name" value="ARGREPRESSOR"/>
</dbReference>
<dbReference type="SUPFAM" id="SSF55252">
    <property type="entry name" value="C-terminal domain of arginine repressor"/>
    <property type="match status" value="1"/>
</dbReference>
<dbReference type="SUPFAM" id="SSF46785">
    <property type="entry name" value="Winged helix' DNA-binding domain"/>
    <property type="match status" value="1"/>
</dbReference>
<name>ARGR_STAAM</name>
<comment type="function">
    <text evidence="1">Regulates arginine biosynthesis genes.</text>
</comment>
<comment type="pathway">
    <text>Amino-acid biosynthesis; L-arginine biosynthesis [regulation].</text>
</comment>
<comment type="subcellular location">
    <subcellularLocation>
        <location evidence="1">Cytoplasm</location>
    </subcellularLocation>
</comment>
<comment type="similarity">
    <text evidence="1">Belongs to the ArgR family.</text>
</comment>
<proteinExistence type="inferred from homology"/>
<accession>P63579</accession>
<accession>Q99TX3</accession>